<protein>
    <recommendedName>
        <fullName evidence="3">Large ribosomal subunit protein eL30A</fullName>
    </recommendedName>
    <alternativeName>
        <fullName>60S ribosomal protein L30-1</fullName>
    </alternativeName>
    <alternativeName>
        <fullName>L32</fullName>
    </alternativeName>
</protein>
<feature type="chain" id="PRO_0000146140" description="Large ribosomal subunit protein eL30A">
    <location>
        <begin position="1"/>
        <end position="109"/>
    </location>
</feature>
<feature type="sequence conflict" description="In Ref. 4; AAB63890." evidence="3" ref="4">
    <original>P</original>
    <variation>S</variation>
    <location>
        <position position="56"/>
    </location>
</feature>
<comment type="function">
    <text evidence="1">Component of the ribosome, a large ribonucleoprotein complex responsible for the synthesis of proteins in the cell. The small ribosomal subunit (SSU) binds messenger RNAs (mRNAs) and translates the encoded message by selecting cognate aminoacyl-transfer RNA (tRNA) molecules. The large subunit (LSU) contains the ribosomal catalytic site termed the peptidyl transferase center (PTC), which catalyzes the formation of peptide bonds, thereby polymerizing the amino acids delivered by tRNAs into a polypeptide chain. The nascent polypeptides leave the ribosome through a tunnel in the LSU and interact with protein factors that function in enzymatic processing, targeting, and the membrane insertion of nascent chains at the exit of the ribosomal tunnel.</text>
</comment>
<comment type="subunit">
    <text evidence="1">Component of the large ribosomal subunit (LSU). Mature yeast ribosomes consist of a small (40S) and a large (60S) subunit. The 40S small subunit contains 1 molecule of ribosomal RNA (18S rRNA) and at least 33 different proteins. The large 60S subunit contains 3 rRNA molecules (25S, 5.8S and 5S rRNA) and at least 46 different proteins.</text>
</comment>
<comment type="subcellular location">
    <subcellularLocation>
        <location evidence="2">Cytoplasm</location>
    </subcellularLocation>
</comment>
<comment type="miscellaneous">
    <text>There are 2 genes for eL30 in S.pombe.</text>
</comment>
<comment type="similarity">
    <text evidence="3">Belongs to the eukaryotic ribosomal protein eL30 family.</text>
</comment>
<name>RL30A_SCHPO</name>
<evidence type="ECO:0000250" key="1">
    <source>
        <dbReference type="UniProtKB" id="P14120"/>
    </source>
</evidence>
<evidence type="ECO:0000269" key="2">
    <source>
    </source>
</evidence>
<evidence type="ECO:0000305" key="3"/>
<dbReference type="EMBL" id="U52080">
    <property type="protein sequence ID" value="AAB17132.1"/>
    <property type="molecule type" value="Genomic_DNA"/>
</dbReference>
<dbReference type="EMBL" id="CU329670">
    <property type="protein sequence ID" value="CAB11499.1"/>
    <property type="molecule type" value="Genomic_DNA"/>
</dbReference>
<dbReference type="EMBL" id="U97398">
    <property type="protein sequence ID" value="AAB63890.1"/>
    <property type="molecule type" value="mRNA"/>
</dbReference>
<dbReference type="PIR" id="T39226">
    <property type="entry name" value="T39226"/>
</dbReference>
<dbReference type="RefSeq" id="NP_593558.1">
    <property type="nucleotide sequence ID" value="NM_001018991.2"/>
</dbReference>
<dbReference type="PDB" id="9AXT">
    <property type="method" value="EM"/>
    <property type="resolution" value="2.40 A"/>
    <property type="chains" value="Bo=1-109"/>
</dbReference>
<dbReference type="PDB" id="9AXU">
    <property type="method" value="EM"/>
    <property type="resolution" value="1.94 A"/>
    <property type="chains" value="o=1-109"/>
</dbReference>
<dbReference type="PDB" id="9AXV">
    <property type="method" value="EM"/>
    <property type="resolution" value="2.40 A"/>
    <property type="chains" value="Bo=1-109"/>
</dbReference>
<dbReference type="PDBsum" id="9AXT"/>
<dbReference type="PDBsum" id="9AXU"/>
<dbReference type="PDBsum" id="9AXV"/>
<dbReference type="EMDB" id="EMD-43972"/>
<dbReference type="EMDB" id="EMD-43973"/>
<dbReference type="EMDB" id="EMD-43976"/>
<dbReference type="SMR" id="P52808"/>
<dbReference type="BioGRID" id="279294">
    <property type="interactions" value="36"/>
</dbReference>
<dbReference type="FunCoup" id="P52808">
    <property type="interactions" value="513"/>
</dbReference>
<dbReference type="STRING" id="284812.P52808"/>
<dbReference type="iPTMnet" id="P52808"/>
<dbReference type="PaxDb" id="4896-SPAC9G1.03c.1"/>
<dbReference type="EnsemblFungi" id="SPAC9G1.03c.1">
    <property type="protein sequence ID" value="SPAC9G1.03c.1:pep"/>
    <property type="gene ID" value="SPAC9G1.03c"/>
</dbReference>
<dbReference type="GeneID" id="2542848"/>
<dbReference type="KEGG" id="spo:2542848"/>
<dbReference type="PomBase" id="SPAC9G1.03c">
    <property type="gene designation" value="rpl3001"/>
</dbReference>
<dbReference type="VEuPathDB" id="FungiDB:SPAC9G1.03c"/>
<dbReference type="eggNOG" id="KOG2988">
    <property type="taxonomic scope" value="Eukaryota"/>
</dbReference>
<dbReference type="HOGENOM" id="CLU_130502_0_1_1"/>
<dbReference type="InParanoid" id="P52808"/>
<dbReference type="OMA" id="YFQGGNN"/>
<dbReference type="PhylomeDB" id="P52808"/>
<dbReference type="Reactome" id="R-SPO-156827">
    <property type="pathway name" value="L13a-mediated translational silencing of Ceruloplasmin expression"/>
</dbReference>
<dbReference type="Reactome" id="R-SPO-1799339">
    <property type="pathway name" value="SRP-dependent cotranslational protein targeting to membrane"/>
</dbReference>
<dbReference type="Reactome" id="R-SPO-72689">
    <property type="pathway name" value="Formation of a pool of free 40S subunits"/>
</dbReference>
<dbReference type="Reactome" id="R-SPO-72706">
    <property type="pathway name" value="GTP hydrolysis and joining of the 60S ribosomal subunit"/>
</dbReference>
<dbReference type="Reactome" id="R-SPO-975956">
    <property type="pathway name" value="Nonsense Mediated Decay (NMD) independent of the Exon Junction Complex (EJC)"/>
</dbReference>
<dbReference type="Reactome" id="R-SPO-975957">
    <property type="pathway name" value="Nonsense Mediated Decay (NMD) enhanced by the Exon Junction Complex (EJC)"/>
</dbReference>
<dbReference type="PRO" id="PR:P52808"/>
<dbReference type="Proteomes" id="UP000002485">
    <property type="component" value="Chromosome I"/>
</dbReference>
<dbReference type="GO" id="GO:0005829">
    <property type="term" value="C:cytosol"/>
    <property type="evidence" value="ECO:0007005"/>
    <property type="project" value="PomBase"/>
</dbReference>
<dbReference type="GO" id="GO:0022625">
    <property type="term" value="C:cytosolic large ribosomal subunit"/>
    <property type="evidence" value="ECO:0000269"/>
    <property type="project" value="PomBase"/>
</dbReference>
<dbReference type="GO" id="GO:0030684">
    <property type="term" value="C:preribosome"/>
    <property type="evidence" value="ECO:0000314"/>
    <property type="project" value="PomBase"/>
</dbReference>
<dbReference type="GO" id="GO:0097157">
    <property type="term" value="F:pre-mRNA intronic binding"/>
    <property type="evidence" value="ECO:0000269"/>
    <property type="project" value="PomBase"/>
</dbReference>
<dbReference type="GO" id="GO:0003723">
    <property type="term" value="F:RNA binding"/>
    <property type="evidence" value="ECO:0000318"/>
    <property type="project" value="GO_Central"/>
</dbReference>
<dbReference type="GO" id="GO:0003735">
    <property type="term" value="F:structural constituent of ribosome"/>
    <property type="evidence" value="ECO:0000318"/>
    <property type="project" value="GO_Central"/>
</dbReference>
<dbReference type="GO" id="GO:0002181">
    <property type="term" value="P:cytoplasmic translation"/>
    <property type="evidence" value="ECO:0000266"/>
    <property type="project" value="PomBase"/>
</dbReference>
<dbReference type="GO" id="GO:0010629">
    <property type="term" value="P:negative regulation of gene expression"/>
    <property type="evidence" value="ECO:0000269"/>
    <property type="project" value="PomBase"/>
</dbReference>
<dbReference type="GO" id="GO:0006364">
    <property type="term" value="P:rRNA processing"/>
    <property type="evidence" value="ECO:0000266"/>
    <property type="project" value="PomBase"/>
</dbReference>
<dbReference type="FunFam" id="3.30.1330.30:FF:000001">
    <property type="entry name" value="60S ribosomal protein L30"/>
    <property type="match status" value="1"/>
</dbReference>
<dbReference type="Gene3D" id="3.30.1330.30">
    <property type="match status" value="1"/>
</dbReference>
<dbReference type="InterPro" id="IPR039109">
    <property type="entry name" value="Ribosomal_eL30-like"/>
</dbReference>
<dbReference type="InterPro" id="IPR029064">
    <property type="entry name" value="Ribosomal_eL30-like_sf"/>
</dbReference>
<dbReference type="InterPro" id="IPR022991">
    <property type="entry name" value="Ribosomal_eL30_CS"/>
</dbReference>
<dbReference type="InterPro" id="IPR004038">
    <property type="entry name" value="Ribosomal_eL8/eL30/eS12/Gad45"/>
</dbReference>
<dbReference type="NCBIfam" id="NF002172">
    <property type="entry name" value="PRK01018.1"/>
    <property type="match status" value="1"/>
</dbReference>
<dbReference type="PANTHER" id="PTHR11449">
    <property type="entry name" value="RIBOSOMAL PROTEIN L30"/>
    <property type="match status" value="1"/>
</dbReference>
<dbReference type="Pfam" id="PF01248">
    <property type="entry name" value="Ribosomal_L7Ae"/>
    <property type="match status" value="1"/>
</dbReference>
<dbReference type="SUPFAM" id="SSF55315">
    <property type="entry name" value="L30e-like"/>
    <property type="match status" value="1"/>
</dbReference>
<dbReference type="PROSITE" id="PS00709">
    <property type="entry name" value="RIBOSOMAL_L30E_1"/>
    <property type="match status" value="1"/>
</dbReference>
<dbReference type="PROSITE" id="PS00993">
    <property type="entry name" value="RIBOSOMAL_L30E_2"/>
    <property type="match status" value="1"/>
</dbReference>
<sequence length="109" mass="11592">MASVVTKKSKKSGDTINAKLALTMKSGKYVLGYKSTLKTLRSGKAKLILIAGNCPPLRKSELEYYAMLSKANVHHYAGTNIDLGTACGKLFRVGVLAITDAGDSDILDA</sequence>
<accession>P52808</accession>
<accession>O14397</accession>
<proteinExistence type="evidence at protein level"/>
<keyword id="KW-0002">3D-structure</keyword>
<keyword id="KW-0963">Cytoplasm</keyword>
<keyword id="KW-1185">Reference proteome</keyword>
<keyword id="KW-0687">Ribonucleoprotein</keyword>
<keyword id="KW-0689">Ribosomal protein</keyword>
<reference key="1">
    <citation type="journal article" date="1995" name="Nucleic Acids Res.">
        <title>The tandem repeat AGGGTAGGGT is, in the fission yeast, a proximal activation sequence and activates basal transcription mediated by the sequence TGTGACTG.</title>
        <authorList>
            <person name="Witt I."/>
            <person name="Kwart M."/>
            <person name="Gross T."/>
            <person name="Kaufer N.F."/>
        </authorList>
    </citation>
    <scope>NUCLEOTIDE SEQUENCE [GENOMIC DNA]</scope>
    <source>
        <strain>URA4-294</strain>
    </source>
</reference>
<reference key="2">
    <citation type="submission" date="1996-03" db="EMBL/GenBank/DDBJ databases">
        <authorList>
            <person name="Gross T."/>
        </authorList>
    </citation>
    <scope>SEQUENCE REVISION TO 80</scope>
</reference>
<reference key="3">
    <citation type="journal article" date="2002" name="Nature">
        <title>The genome sequence of Schizosaccharomyces pombe.</title>
        <authorList>
            <person name="Wood V."/>
            <person name="Gwilliam R."/>
            <person name="Rajandream M.A."/>
            <person name="Lyne M.H."/>
            <person name="Lyne R."/>
            <person name="Stewart A."/>
            <person name="Sgouros J.G."/>
            <person name="Peat N."/>
            <person name="Hayles J."/>
            <person name="Baker S.G."/>
            <person name="Basham D."/>
            <person name="Bowman S."/>
            <person name="Brooks K."/>
            <person name="Brown D."/>
            <person name="Brown S."/>
            <person name="Chillingworth T."/>
            <person name="Churcher C.M."/>
            <person name="Collins M."/>
            <person name="Connor R."/>
            <person name="Cronin A."/>
            <person name="Davis P."/>
            <person name="Feltwell T."/>
            <person name="Fraser A."/>
            <person name="Gentles S."/>
            <person name="Goble A."/>
            <person name="Hamlin N."/>
            <person name="Harris D.E."/>
            <person name="Hidalgo J."/>
            <person name="Hodgson G."/>
            <person name="Holroyd S."/>
            <person name="Hornsby T."/>
            <person name="Howarth S."/>
            <person name="Huckle E.J."/>
            <person name="Hunt S."/>
            <person name="Jagels K."/>
            <person name="James K.D."/>
            <person name="Jones L."/>
            <person name="Jones M."/>
            <person name="Leather S."/>
            <person name="McDonald S."/>
            <person name="McLean J."/>
            <person name="Mooney P."/>
            <person name="Moule S."/>
            <person name="Mungall K.L."/>
            <person name="Murphy L.D."/>
            <person name="Niblett D."/>
            <person name="Odell C."/>
            <person name="Oliver K."/>
            <person name="O'Neil S."/>
            <person name="Pearson D."/>
            <person name="Quail M.A."/>
            <person name="Rabbinowitsch E."/>
            <person name="Rutherford K.M."/>
            <person name="Rutter S."/>
            <person name="Saunders D."/>
            <person name="Seeger K."/>
            <person name="Sharp S."/>
            <person name="Skelton J."/>
            <person name="Simmonds M.N."/>
            <person name="Squares R."/>
            <person name="Squares S."/>
            <person name="Stevens K."/>
            <person name="Taylor K."/>
            <person name="Taylor R.G."/>
            <person name="Tivey A."/>
            <person name="Walsh S.V."/>
            <person name="Warren T."/>
            <person name="Whitehead S."/>
            <person name="Woodward J.R."/>
            <person name="Volckaert G."/>
            <person name="Aert R."/>
            <person name="Robben J."/>
            <person name="Grymonprez B."/>
            <person name="Weltjens I."/>
            <person name="Vanstreels E."/>
            <person name="Rieger M."/>
            <person name="Schaefer M."/>
            <person name="Mueller-Auer S."/>
            <person name="Gabel C."/>
            <person name="Fuchs M."/>
            <person name="Duesterhoeft A."/>
            <person name="Fritzc C."/>
            <person name="Holzer E."/>
            <person name="Moestl D."/>
            <person name="Hilbert H."/>
            <person name="Borzym K."/>
            <person name="Langer I."/>
            <person name="Beck A."/>
            <person name="Lehrach H."/>
            <person name="Reinhardt R."/>
            <person name="Pohl T.M."/>
            <person name="Eger P."/>
            <person name="Zimmermann W."/>
            <person name="Wedler H."/>
            <person name="Wambutt R."/>
            <person name="Purnelle B."/>
            <person name="Goffeau A."/>
            <person name="Cadieu E."/>
            <person name="Dreano S."/>
            <person name="Gloux S."/>
            <person name="Lelaure V."/>
            <person name="Mottier S."/>
            <person name="Galibert F."/>
            <person name="Aves S.J."/>
            <person name="Xiang Z."/>
            <person name="Hunt C."/>
            <person name="Moore K."/>
            <person name="Hurst S.M."/>
            <person name="Lucas M."/>
            <person name="Rochet M."/>
            <person name="Gaillardin C."/>
            <person name="Tallada V.A."/>
            <person name="Garzon A."/>
            <person name="Thode G."/>
            <person name="Daga R.R."/>
            <person name="Cruzado L."/>
            <person name="Jimenez J."/>
            <person name="Sanchez M."/>
            <person name="del Rey F."/>
            <person name="Benito J."/>
            <person name="Dominguez A."/>
            <person name="Revuelta J.L."/>
            <person name="Moreno S."/>
            <person name="Armstrong J."/>
            <person name="Forsburg S.L."/>
            <person name="Cerutti L."/>
            <person name="Lowe T."/>
            <person name="McCombie W.R."/>
            <person name="Paulsen I."/>
            <person name="Potashkin J."/>
            <person name="Shpakovski G.V."/>
            <person name="Ussery D."/>
            <person name="Barrell B.G."/>
            <person name="Nurse P."/>
        </authorList>
    </citation>
    <scope>NUCLEOTIDE SEQUENCE [LARGE SCALE GENOMIC DNA]</scope>
    <source>
        <strain>972 / ATCC 24843</strain>
    </source>
</reference>
<reference key="4">
    <citation type="submission" date="1997-04" db="EMBL/GenBank/DDBJ databases">
        <authorList>
            <person name="Jang Y.-J."/>
            <person name="Yoo H.-S."/>
        </authorList>
    </citation>
    <scope>NUCLEOTIDE SEQUENCE [MRNA] OF 1-69</scope>
    <source>
        <strain>972 / ATCC 24843</strain>
    </source>
</reference>
<reference key="5">
    <citation type="journal article" date="2006" name="Nat. Biotechnol.">
        <title>ORFeome cloning and global analysis of protein localization in the fission yeast Schizosaccharomyces pombe.</title>
        <authorList>
            <person name="Matsuyama A."/>
            <person name="Arai R."/>
            <person name="Yashiroda Y."/>
            <person name="Shirai A."/>
            <person name="Kamata A."/>
            <person name="Sekido S."/>
            <person name="Kobayashi Y."/>
            <person name="Hashimoto A."/>
            <person name="Hamamoto M."/>
            <person name="Hiraoka Y."/>
            <person name="Horinouchi S."/>
            <person name="Yoshida M."/>
        </authorList>
    </citation>
    <scope>SUBCELLULAR LOCATION [LARGE SCALE ANALYSIS]</scope>
</reference>
<gene>
    <name type="primary">rpl3001</name>
    <name type="synonym">rpl30</name>
    <name type="synonym">rpl30a</name>
    <name type="synonym">rpl32</name>
    <name type="ORF">SPAC9G1.03c</name>
</gene>
<organism>
    <name type="scientific">Schizosaccharomyces pombe (strain 972 / ATCC 24843)</name>
    <name type="common">Fission yeast</name>
    <dbReference type="NCBI Taxonomy" id="284812"/>
    <lineage>
        <taxon>Eukaryota</taxon>
        <taxon>Fungi</taxon>
        <taxon>Dikarya</taxon>
        <taxon>Ascomycota</taxon>
        <taxon>Taphrinomycotina</taxon>
        <taxon>Schizosaccharomycetes</taxon>
        <taxon>Schizosaccharomycetales</taxon>
        <taxon>Schizosaccharomycetaceae</taxon>
        <taxon>Schizosaccharomyces</taxon>
    </lineage>
</organism>